<feature type="chain" id="PRO_0000216744" description="Phycocyanobilin:ferredoxin oxidoreductase">
    <location>
        <begin position="1"/>
        <end position="236"/>
    </location>
</feature>
<proteinExistence type="inferred from homology"/>
<evidence type="ECO:0000250" key="1"/>
<evidence type="ECO:0000305" key="2"/>
<sequence>MSLRQHQHPLIQRLADRIEAIWQAFFPLAPYALPEDLGYVEGKLEGERLTIENHCYQAPPFRKLHLELARVGESLDILHCVMFPEPRYDLPMFGCDLVGGRGQISAAIVDLSPVTGQLPAAYTCALNALPKLTFRQPRELPPWGHIFSPFCIFIRPQGEAEEQQFLDRIGEYLTLHCQLSQQAVPTDHPQAVIAGQRQYCQQQQQNDKTRRVLEKAFGVPWAERYMTTVLFDVPPV</sequence>
<protein>
    <recommendedName>
        <fullName>Phycocyanobilin:ferredoxin oxidoreductase</fullName>
        <ecNumber>1.3.7.5</ecNumber>
    </recommendedName>
</protein>
<gene>
    <name type="primary">pcyA</name>
    <name type="ordered locus">tll2308</name>
</gene>
<name>PCYA_THEVB</name>
<dbReference type="EC" id="1.3.7.5"/>
<dbReference type="EMBL" id="BA000039">
    <property type="protein sequence ID" value="BAC09860.1"/>
    <property type="molecule type" value="Genomic_DNA"/>
</dbReference>
<dbReference type="RefSeq" id="NP_683098.1">
    <property type="nucleotide sequence ID" value="NC_004113.1"/>
</dbReference>
<dbReference type="RefSeq" id="WP_011058141.1">
    <property type="nucleotide sequence ID" value="NC_004113.1"/>
</dbReference>
<dbReference type="SMR" id="P59288"/>
<dbReference type="IntAct" id="P59288">
    <property type="interactions" value="1"/>
</dbReference>
<dbReference type="MINT" id="P59288"/>
<dbReference type="STRING" id="197221.gene:10748926"/>
<dbReference type="EnsemblBacteria" id="BAC09860">
    <property type="protein sequence ID" value="BAC09860"/>
    <property type="gene ID" value="BAC09860"/>
</dbReference>
<dbReference type="KEGG" id="tel:tll2308"/>
<dbReference type="PATRIC" id="fig|197221.4.peg.2417"/>
<dbReference type="eggNOG" id="ENOG502Z7RN">
    <property type="taxonomic scope" value="Bacteria"/>
</dbReference>
<dbReference type="Proteomes" id="UP000000440">
    <property type="component" value="Chromosome"/>
</dbReference>
<dbReference type="GO" id="GO:0050897">
    <property type="term" value="F:cobalt ion binding"/>
    <property type="evidence" value="ECO:0007669"/>
    <property type="project" value="InterPro"/>
</dbReference>
<dbReference type="GO" id="GO:0050620">
    <property type="term" value="F:phycocyanobilin:ferredoxin oxidoreductase activity"/>
    <property type="evidence" value="ECO:0007669"/>
    <property type="project" value="UniProtKB-UniRule"/>
</dbReference>
<dbReference type="GO" id="GO:0010024">
    <property type="term" value="P:phytochromobilin biosynthetic process"/>
    <property type="evidence" value="ECO:0007669"/>
    <property type="project" value="InterPro"/>
</dbReference>
<dbReference type="Gene3D" id="3.40.1500.20">
    <property type="match status" value="1"/>
</dbReference>
<dbReference type="HAMAP" id="MF_00618">
    <property type="entry name" value="Ferredoxin_bilin_red"/>
    <property type="match status" value="1"/>
</dbReference>
<dbReference type="InterPro" id="IPR009249">
    <property type="entry name" value="Ferredoxin-dep_bilin_Rdtase"/>
</dbReference>
<dbReference type="InterPro" id="IPR022870">
    <property type="entry name" value="Ferredoxin_bilin_OxRdtase"/>
</dbReference>
<dbReference type="NCBIfam" id="NF002760">
    <property type="entry name" value="PRK02816.1"/>
    <property type="match status" value="1"/>
</dbReference>
<dbReference type="PANTHER" id="PTHR34557">
    <property type="entry name" value="PHYTOCHROMOBILIN:FERREDOXIN OXIDOREDUCTASE, CHLOROPLASTIC"/>
    <property type="match status" value="1"/>
</dbReference>
<dbReference type="PANTHER" id="PTHR34557:SF1">
    <property type="entry name" value="PHYTOCHROMOBILIN:FERREDOXIN OXIDOREDUCTASE, CHLOROPLASTIC"/>
    <property type="match status" value="1"/>
</dbReference>
<dbReference type="Pfam" id="PF05996">
    <property type="entry name" value="Fe_bilin_red"/>
    <property type="match status" value="1"/>
</dbReference>
<keyword id="KW-0560">Oxidoreductase</keyword>
<keyword id="KW-1185">Reference proteome</keyword>
<organism>
    <name type="scientific">Thermosynechococcus vestitus (strain NIES-2133 / IAM M-273 / BP-1)</name>
    <dbReference type="NCBI Taxonomy" id="197221"/>
    <lineage>
        <taxon>Bacteria</taxon>
        <taxon>Bacillati</taxon>
        <taxon>Cyanobacteriota</taxon>
        <taxon>Cyanophyceae</taxon>
        <taxon>Acaryochloridales</taxon>
        <taxon>Thermosynechococcaceae</taxon>
        <taxon>Thermosynechococcus</taxon>
    </lineage>
</organism>
<reference key="1">
    <citation type="journal article" date="2002" name="DNA Res.">
        <title>Complete genome structure of the thermophilic cyanobacterium Thermosynechococcus elongatus BP-1.</title>
        <authorList>
            <person name="Nakamura Y."/>
            <person name="Kaneko T."/>
            <person name="Sato S."/>
            <person name="Ikeuchi M."/>
            <person name="Katoh H."/>
            <person name="Sasamoto S."/>
            <person name="Watanabe A."/>
            <person name="Iriguchi M."/>
            <person name="Kawashima K."/>
            <person name="Kimura T."/>
            <person name="Kishida Y."/>
            <person name="Kiyokawa C."/>
            <person name="Kohara M."/>
            <person name="Matsumoto M."/>
            <person name="Matsuno A."/>
            <person name="Nakazaki N."/>
            <person name="Shimpo S."/>
            <person name="Sugimoto M."/>
            <person name="Takeuchi C."/>
            <person name="Yamada M."/>
            <person name="Tabata S."/>
        </authorList>
    </citation>
    <scope>NUCLEOTIDE SEQUENCE [LARGE SCALE GENOMIC DNA]</scope>
    <source>
        <strain>NIES-2133 / IAM M-273 / BP-1</strain>
    </source>
</reference>
<accession>P59288</accession>
<comment type="function">
    <text evidence="1">Catalyzes the four-electron reduction of biliverdin IX-alpha (2-electron reduction at both the A and D rings); the reaction proceeds via an isolatable 2-electron intermediate, 181,182-dihydrobiliverdin.</text>
</comment>
<comment type="catalytic activity">
    <reaction>
        <text>(2R,3Z)-phycocyanobilin + 4 oxidized [2Fe-2S]-[ferredoxin] = biliverdin IXalpha + 4 reduced [2Fe-2S]-[ferredoxin] + 4 H(+)</text>
        <dbReference type="Rhea" id="RHEA:15309"/>
        <dbReference type="Rhea" id="RHEA-COMP:10000"/>
        <dbReference type="Rhea" id="RHEA-COMP:10001"/>
        <dbReference type="ChEBI" id="CHEBI:15378"/>
        <dbReference type="ChEBI" id="CHEBI:33737"/>
        <dbReference type="ChEBI" id="CHEBI:33738"/>
        <dbReference type="ChEBI" id="CHEBI:57437"/>
        <dbReference type="ChEBI" id="CHEBI:57991"/>
        <dbReference type="EC" id="1.3.7.5"/>
    </reaction>
</comment>
<comment type="similarity">
    <text evidence="2">Belongs to the HY2 family.</text>
</comment>